<dbReference type="EMBL" id="AE017220">
    <property type="protein sequence ID" value="AAX66646.1"/>
    <property type="molecule type" value="Genomic_DNA"/>
</dbReference>
<dbReference type="RefSeq" id="WP_001275401.1">
    <property type="nucleotide sequence ID" value="NC_006905.1"/>
</dbReference>
<dbReference type="SMR" id="Q57KW6"/>
<dbReference type="KEGG" id="sec:SCH_2740"/>
<dbReference type="HOGENOM" id="CLU_114845_0_0_6"/>
<dbReference type="Proteomes" id="UP000000538">
    <property type="component" value="Chromosome"/>
</dbReference>
<dbReference type="GO" id="GO:0010181">
    <property type="term" value="F:FMN binding"/>
    <property type="evidence" value="ECO:0007669"/>
    <property type="project" value="InterPro"/>
</dbReference>
<dbReference type="GO" id="GO:0036211">
    <property type="term" value="P:protein modification process"/>
    <property type="evidence" value="ECO:0007669"/>
    <property type="project" value="InterPro"/>
</dbReference>
<dbReference type="FunFam" id="3.40.50.360:FF:000005">
    <property type="entry name" value="Protein NrdI"/>
    <property type="match status" value="1"/>
</dbReference>
<dbReference type="Gene3D" id="3.40.50.360">
    <property type="match status" value="1"/>
</dbReference>
<dbReference type="HAMAP" id="MF_00128">
    <property type="entry name" value="NrdI"/>
    <property type="match status" value="1"/>
</dbReference>
<dbReference type="InterPro" id="IPR029039">
    <property type="entry name" value="Flavoprotein-like_sf"/>
</dbReference>
<dbReference type="InterPro" id="IPR020852">
    <property type="entry name" value="RNR_Ib_NrdI_bac"/>
</dbReference>
<dbReference type="InterPro" id="IPR004465">
    <property type="entry name" value="RNR_NrdI"/>
</dbReference>
<dbReference type="NCBIfam" id="TIGR00333">
    <property type="entry name" value="nrdI"/>
    <property type="match status" value="1"/>
</dbReference>
<dbReference type="PANTHER" id="PTHR37297">
    <property type="entry name" value="PROTEIN NRDI"/>
    <property type="match status" value="1"/>
</dbReference>
<dbReference type="PANTHER" id="PTHR37297:SF1">
    <property type="entry name" value="PROTEIN NRDI"/>
    <property type="match status" value="1"/>
</dbReference>
<dbReference type="Pfam" id="PF07972">
    <property type="entry name" value="Flavodoxin_NdrI"/>
    <property type="match status" value="1"/>
</dbReference>
<dbReference type="PIRSF" id="PIRSF005087">
    <property type="entry name" value="NrdI"/>
    <property type="match status" value="1"/>
</dbReference>
<dbReference type="SUPFAM" id="SSF52218">
    <property type="entry name" value="Flavoproteins"/>
    <property type="match status" value="1"/>
</dbReference>
<protein>
    <recommendedName>
        <fullName evidence="1">Protein NrdI</fullName>
    </recommendedName>
</protein>
<comment type="function">
    <text evidence="1">Probably involved in ribonucleotide reductase function.</text>
</comment>
<comment type="similarity">
    <text evidence="1">Belongs to the NrdI family.</text>
</comment>
<evidence type="ECO:0000255" key="1">
    <source>
        <dbReference type="HAMAP-Rule" id="MF_00128"/>
    </source>
</evidence>
<gene>
    <name evidence="1" type="primary">nrdI</name>
    <name type="ordered locus">SCH_2740</name>
</gene>
<organism>
    <name type="scientific">Salmonella choleraesuis (strain SC-B67)</name>
    <dbReference type="NCBI Taxonomy" id="321314"/>
    <lineage>
        <taxon>Bacteria</taxon>
        <taxon>Pseudomonadati</taxon>
        <taxon>Pseudomonadota</taxon>
        <taxon>Gammaproteobacteria</taxon>
        <taxon>Enterobacterales</taxon>
        <taxon>Enterobacteriaceae</taxon>
        <taxon>Salmonella</taxon>
    </lineage>
</organism>
<sequence length="136" mass="15324">MSALVYFSSSSENTHRFMQRLGLPATRIPLNERERIQVDEPYILVVPSYGGGGMAGAVPRQVIRFLNDEHNRARIRGVIASGNRNFGDAWGCAGDVIAQKCGVPWLYRFELMGTQRDIDNVRKGVNEFWQQLPRSA</sequence>
<accession>Q57KW6</accession>
<name>NRDI_SALCH</name>
<reference key="1">
    <citation type="journal article" date="2005" name="Nucleic Acids Res.">
        <title>The genome sequence of Salmonella enterica serovar Choleraesuis, a highly invasive and resistant zoonotic pathogen.</title>
        <authorList>
            <person name="Chiu C.-H."/>
            <person name="Tang P."/>
            <person name="Chu C."/>
            <person name="Hu S."/>
            <person name="Bao Q."/>
            <person name="Yu J."/>
            <person name="Chou Y.-Y."/>
            <person name="Wang H.-S."/>
            <person name="Lee Y.-S."/>
        </authorList>
    </citation>
    <scope>NUCLEOTIDE SEQUENCE [LARGE SCALE GENOMIC DNA]</scope>
    <source>
        <strain>SC-B67</strain>
    </source>
</reference>
<proteinExistence type="inferred from homology"/>
<feature type="chain" id="PRO_0000164329" description="Protein NrdI">
    <location>
        <begin position="1"/>
        <end position="136"/>
    </location>
</feature>